<name>RFCS_STAMF</name>
<organism>
    <name type="scientific">Staphylothermus marinus (strain ATCC 43588 / DSM 3639 / JCM 9404 / F1)</name>
    <dbReference type="NCBI Taxonomy" id="399550"/>
    <lineage>
        <taxon>Archaea</taxon>
        <taxon>Thermoproteota</taxon>
        <taxon>Thermoprotei</taxon>
        <taxon>Desulfurococcales</taxon>
        <taxon>Desulfurococcaceae</taxon>
        <taxon>Staphylothermus</taxon>
    </lineage>
</organism>
<keyword id="KW-0067">ATP-binding</keyword>
<keyword id="KW-0235">DNA replication</keyword>
<keyword id="KW-0547">Nucleotide-binding</keyword>
<keyword id="KW-1185">Reference proteome</keyword>
<gene>
    <name evidence="1" type="primary">rfcS</name>
    <name type="ordered locus">Smar_1225</name>
</gene>
<sequence>MSSSREVIAELLWAEKYRPKTLDEIVDQEEIVSRLKQFVKERNMPHLLFAGPPGTGKTTAAHCLAHDLFGENYRQYMLELNASDERGIDVIRSKVKEFARTRVAANIPFKIVLLDEADNMTADAQQALRRLMEMYTATTRFILIANYPSKIIEPIQSRCAVFRFAPLKKEDVISRLKWIAEQEKVEIDEEALEAIHDLSEGDMRRAINILQAAAALGKVTVDSVYKVVGLAHPREIRQMIQLALAGNFNDAREKLRELMINYGLSGVDVIKQVHREIFSTDIKIPDEFKIIIADLAGEIQFRLVEGADDEIQLNAFLARLAFLGKKLKP</sequence>
<feature type="chain" id="PRO_0000296654" description="Replication factor C small subunit">
    <location>
        <begin position="1"/>
        <end position="329"/>
    </location>
</feature>
<feature type="binding site" evidence="1">
    <location>
        <begin position="51"/>
        <end position="58"/>
    </location>
    <ligand>
        <name>ATP</name>
        <dbReference type="ChEBI" id="CHEBI:30616"/>
    </ligand>
</feature>
<reference key="1">
    <citation type="journal article" date="2009" name="BMC Genomics">
        <title>The complete genome sequence of Staphylothermus marinus reveals differences in sulfur metabolism among heterotrophic Crenarchaeota.</title>
        <authorList>
            <person name="Anderson I.J."/>
            <person name="Dharmarajan L."/>
            <person name="Rodriguez J."/>
            <person name="Hooper S."/>
            <person name="Porat I."/>
            <person name="Ulrich L.E."/>
            <person name="Elkins J.G."/>
            <person name="Mavromatis K."/>
            <person name="Sun H."/>
            <person name="Land M."/>
            <person name="Lapidus A."/>
            <person name="Lucas S."/>
            <person name="Barry K."/>
            <person name="Huber H."/>
            <person name="Zhulin I.B."/>
            <person name="Whitman W.B."/>
            <person name="Mukhopadhyay B."/>
            <person name="Woese C."/>
            <person name="Bristow J."/>
            <person name="Kyrpides N."/>
        </authorList>
    </citation>
    <scope>NUCLEOTIDE SEQUENCE [LARGE SCALE GENOMIC DNA]</scope>
    <source>
        <strain>ATCC 43588 / DSM 3639 / JCM 9404 / F1</strain>
    </source>
</reference>
<reference key="2">
    <citation type="journal article" date="2009" name="Stand. Genomic Sci.">
        <title>Complete genome sequence of Staphylothermus marinus Stetter and Fiala 1986 type strain F1.</title>
        <authorList>
            <person name="Anderson I.J."/>
            <person name="Sun H."/>
            <person name="Lapidus A."/>
            <person name="Copeland A."/>
            <person name="Glavina Del Rio T."/>
            <person name="Tice H."/>
            <person name="Dalin E."/>
            <person name="Lucas S."/>
            <person name="Barry K."/>
            <person name="Land M."/>
            <person name="Richardson P."/>
            <person name="Huber H."/>
            <person name="Kyrpides N.C."/>
        </authorList>
    </citation>
    <scope>NUCLEOTIDE SEQUENCE [LARGE SCALE GENOMIC DNA]</scope>
    <source>
        <strain>ATCC 43588 / DSM 3639 / JCM 9404 / F1</strain>
    </source>
</reference>
<comment type="function">
    <text evidence="1">Part of the RFC clamp loader complex which loads the PCNA sliding clamp onto DNA.</text>
</comment>
<comment type="subunit">
    <text evidence="1">Heteromultimer composed of small subunits (RfcS) and large subunits (RfcL).</text>
</comment>
<comment type="similarity">
    <text evidence="1">Belongs to the activator 1 small subunits family. RfcS subfamily.</text>
</comment>
<proteinExistence type="inferred from homology"/>
<accession>A3DNV9</accession>
<evidence type="ECO:0000255" key="1">
    <source>
        <dbReference type="HAMAP-Rule" id="MF_01509"/>
    </source>
</evidence>
<dbReference type="EMBL" id="CP000575">
    <property type="protein sequence ID" value="ABN70319.1"/>
    <property type="molecule type" value="Genomic_DNA"/>
</dbReference>
<dbReference type="RefSeq" id="WP_011839510.1">
    <property type="nucleotide sequence ID" value="NC_009033.1"/>
</dbReference>
<dbReference type="SMR" id="A3DNV9"/>
<dbReference type="STRING" id="399550.Smar_1225"/>
<dbReference type="GeneID" id="4907542"/>
<dbReference type="KEGG" id="smr:Smar_1225"/>
<dbReference type="eggNOG" id="arCOG00469">
    <property type="taxonomic scope" value="Archaea"/>
</dbReference>
<dbReference type="HOGENOM" id="CLU_042324_2_1_2"/>
<dbReference type="OrthoDB" id="7928at2157"/>
<dbReference type="Proteomes" id="UP000000254">
    <property type="component" value="Chromosome"/>
</dbReference>
<dbReference type="GO" id="GO:0005663">
    <property type="term" value="C:DNA replication factor C complex"/>
    <property type="evidence" value="ECO:0007669"/>
    <property type="project" value="InterPro"/>
</dbReference>
<dbReference type="GO" id="GO:0005524">
    <property type="term" value="F:ATP binding"/>
    <property type="evidence" value="ECO:0007669"/>
    <property type="project" value="UniProtKB-UniRule"/>
</dbReference>
<dbReference type="GO" id="GO:0016887">
    <property type="term" value="F:ATP hydrolysis activity"/>
    <property type="evidence" value="ECO:0007669"/>
    <property type="project" value="InterPro"/>
</dbReference>
<dbReference type="GO" id="GO:0003677">
    <property type="term" value="F:DNA binding"/>
    <property type="evidence" value="ECO:0007669"/>
    <property type="project" value="InterPro"/>
</dbReference>
<dbReference type="GO" id="GO:0003689">
    <property type="term" value="F:DNA clamp loader activity"/>
    <property type="evidence" value="ECO:0007669"/>
    <property type="project" value="UniProtKB-UniRule"/>
</dbReference>
<dbReference type="GO" id="GO:0006281">
    <property type="term" value="P:DNA repair"/>
    <property type="evidence" value="ECO:0007669"/>
    <property type="project" value="TreeGrafter"/>
</dbReference>
<dbReference type="GO" id="GO:0006261">
    <property type="term" value="P:DNA-templated DNA replication"/>
    <property type="evidence" value="ECO:0007669"/>
    <property type="project" value="TreeGrafter"/>
</dbReference>
<dbReference type="CDD" id="cd00009">
    <property type="entry name" value="AAA"/>
    <property type="match status" value="1"/>
</dbReference>
<dbReference type="CDD" id="cd18140">
    <property type="entry name" value="HLD_clamp_RFC"/>
    <property type="match status" value="1"/>
</dbReference>
<dbReference type="FunFam" id="1.20.272.10:FF:000029">
    <property type="entry name" value="Replication factor C small subunit"/>
    <property type="match status" value="1"/>
</dbReference>
<dbReference type="FunFam" id="1.10.8.60:FF:000012">
    <property type="entry name" value="Replication factor C subunit 4"/>
    <property type="match status" value="1"/>
</dbReference>
<dbReference type="FunFam" id="3.40.50.300:FF:000129">
    <property type="entry name" value="Replication factor C subunit 5"/>
    <property type="match status" value="1"/>
</dbReference>
<dbReference type="Gene3D" id="1.10.8.60">
    <property type="match status" value="1"/>
</dbReference>
<dbReference type="Gene3D" id="1.20.272.10">
    <property type="match status" value="1"/>
</dbReference>
<dbReference type="Gene3D" id="3.40.50.300">
    <property type="entry name" value="P-loop containing nucleotide triphosphate hydrolases"/>
    <property type="match status" value="1"/>
</dbReference>
<dbReference type="HAMAP" id="MF_01509">
    <property type="entry name" value="RfcS"/>
    <property type="match status" value="1"/>
</dbReference>
<dbReference type="InterPro" id="IPR003593">
    <property type="entry name" value="AAA+_ATPase"/>
</dbReference>
<dbReference type="InterPro" id="IPR003959">
    <property type="entry name" value="ATPase_AAA_core"/>
</dbReference>
<dbReference type="InterPro" id="IPR000641">
    <property type="entry name" value="CbxX/CfxQ"/>
</dbReference>
<dbReference type="InterPro" id="IPR008921">
    <property type="entry name" value="DNA_pol3_clamp-load_cplx_C"/>
</dbReference>
<dbReference type="InterPro" id="IPR050238">
    <property type="entry name" value="DNA_Rep/Repair_Clamp_Loader"/>
</dbReference>
<dbReference type="InterPro" id="IPR027417">
    <property type="entry name" value="P-loop_NTPase"/>
</dbReference>
<dbReference type="InterPro" id="IPR023748">
    <property type="entry name" value="Rep_factor-C_ssu_arc"/>
</dbReference>
<dbReference type="InterPro" id="IPR013748">
    <property type="entry name" value="Rep_factorC_C"/>
</dbReference>
<dbReference type="InterPro" id="IPR047854">
    <property type="entry name" value="RFC_lid"/>
</dbReference>
<dbReference type="NCBIfam" id="NF001679">
    <property type="entry name" value="PRK00440.1"/>
    <property type="match status" value="1"/>
</dbReference>
<dbReference type="PANTHER" id="PTHR11669">
    <property type="entry name" value="REPLICATION FACTOR C / DNA POLYMERASE III GAMMA-TAU SUBUNIT"/>
    <property type="match status" value="1"/>
</dbReference>
<dbReference type="PANTHER" id="PTHR11669:SF20">
    <property type="entry name" value="REPLICATION FACTOR C SUBUNIT 4"/>
    <property type="match status" value="1"/>
</dbReference>
<dbReference type="Pfam" id="PF00004">
    <property type="entry name" value="AAA"/>
    <property type="match status" value="1"/>
</dbReference>
<dbReference type="Pfam" id="PF21960">
    <property type="entry name" value="RCF1-5-like_lid"/>
    <property type="match status" value="1"/>
</dbReference>
<dbReference type="Pfam" id="PF08542">
    <property type="entry name" value="Rep_fac_C"/>
    <property type="match status" value="1"/>
</dbReference>
<dbReference type="PRINTS" id="PR00819">
    <property type="entry name" value="CBXCFQXSUPER"/>
</dbReference>
<dbReference type="SMART" id="SM00382">
    <property type="entry name" value="AAA"/>
    <property type="match status" value="1"/>
</dbReference>
<dbReference type="SUPFAM" id="SSF52540">
    <property type="entry name" value="P-loop containing nucleoside triphosphate hydrolases"/>
    <property type="match status" value="1"/>
</dbReference>
<dbReference type="SUPFAM" id="SSF48019">
    <property type="entry name" value="post-AAA+ oligomerization domain-like"/>
    <property type="match status" value="1"/>
</dbReference>
<protein>
    <recommendedName>
        <fullName evidence="1">Replication factor C small subunit</fullName>
        <shortName evidence="1">RFC small subunit</shortName>
    </recommendedName>
    <alternativeName>
        <fullName evidence="1">Clamp loader small subunit</fullName>
    </alternativeName>
</protein>